<evidence type="ECO:0000250" key="1">
    <source>
        <dbReference type="UniProtKB" id="Q8CCG4"/>
    </source>
</evidence>
<evidence type="ECO:0000256" key="2">
    <source>
        <dbReference type="SAM" id="MobiDB-lite"/>
    </source>
</evidence>
<evidence type="ECO:0000269" key="3">
    <source>
    </source>
</evidence>
<evidence type="ECO:0000269" key="4">
    <source>
    </source>
</evidence>
<evidence type="ECO:0000269" key="5">
    <source>
    </source>
</evidence>
<evidence type="ECO:0000305" key="6"/>
<evidence type="ECO:0007744" key="7">
    <source>
    </source>
</evidence>
<name>DPPA4_HUMAN</name>
<dbReference type="EMBL" id="AK001575">
    <property type="protein sequence ID" value="BAA91765.1"/>
    <property type="status" value="ALT_INIT"/>
    <property type="molecule type" value="mRNA"/>
</dbReference>
<dbReference type="EMBL" id="AK022698">
    <property type="protein sequence ID" value="BAB14188.1"/>
    <property type="status" value="ALT_FRAME"/>
    <property type="molecule type" value="mRNA"/>
</dbReference>
<dbReference type="EMBL" id="AK290992">
    <property type="protein sequence ID" value="BAF83681.1"/>
    <property type="molecule type" value="mRNA"/>
</dbReference>
<dbReference type="EMBL" id="AC076971">
    <property type="status" value="NOT_ANNOTATED_CDS"/>
    <property type="molecule type" value="Genomic_DNA"/>
</dbReference>
<dbReference type="EMBL" id="BC032846">
    <property type="protein sequence ID" value="AAH32846.2"/>
    <property type="molecule type" value="mRNA"/>
</dbReference>
<dbReference type="CCDS" id="CCDS33814.1"/>
<dbReference type="RefSeq" id="NP_060659.3">
    <property type="nucleotide sequence ID" value="NM_018189.3"/>
</dbReference>
<dbReference type="BioGRID" id="120507">
    <property type="interactions" value="142"/>
</dbReference>
<dbReference type="FunCoup" id="Q7L190">
    <property type="interactions" value="301"/>
</dbReference>
<dbReference type="IntAct" id="Q7L190">
    <property type="interactions" value="67"/>
</dbReference>
<dbReference type="MINT" id="Q7L190"/>
<dbReference type="STRING" id="9606.ENSP00000335306"/>
<dbReference type="iPTMnet" id="Q7L190"/>
<dbReference type="PhosphoSitePlus" id="Q7L190"/>
<dbReference type="BioMuta" id="DPPA4"/>
<dbReference type="DMDM" id="296434484"/>
<dbReference type="jPOST" id="Q7L190"/>
<dbReference type="MassIVE" id="Q7L190"/>
<dbReference type="PaxDb" id="9606-ENSP00000335306"/>
<dbReference type="PeptideAtlas" id="Q7L190"/>
<dbReference type="ProteomicsDB" id="68742"/>
<dbReference type="Antibodypedia" id="32419">
    <property type="antibodies" value="339 antibodies from 31 providers"/>
</dbReference>
<dbReference type="DNASU" id="55211"/>
<dbReference type="Ensembl" id="ENST00000335658.7">
    <property type="protein sequence ID" value="ENSP00000335306.6"/>
    <property type="gene ID" value="ENSG00000121570.13"/>
</dbReference>
<dbReference type="GeneID" id="55211"/>
<dbReference type="KEGG" id="hsa:55211"/>
<dbReference type="MANE-Select" id="ENST00000335658.7">
    <property type="protein sequence ID" value="ENSP00000335306.6"/>
    <property type="RefSeq nucleotide sequence ID" value="NM_018189.4"/>
    <property type="RefSeq protein sequence ID" value="NP_060659.3"/>
</dbReference>
<dbReference type="UCSC" id="uc003dxq.4">
    <property type="organism name" value="human"/>
</dbReference>
<dbReference type="AGR" id="HGNC:19200"/>
<dbReference type="CTD" id="55211"/>
<dbReference type="DisGeNET" id="55211"/>
<dbReference type="GeneCards" id="DPPA4"/>
<dbReference type="HGNC" id="HGNC:19200">
    <property type="gene designation" value="DPPA4"/>
</dbReference>
<dbReference type="HPA" id="ENSG00000121570">
    <property type="expression patterns" value="Tissue enhanced (bone marrow, lymphoid tissue, testis)"/>
</dbReference>
<dbReference type="MalaCards" id="DPPA4"/>
<dbReference type="MIM" id="614125">
    <property type="type" value="gene"/>
</dbReference>
<dbReference type="neXtProt" id="NX_Q7L190"/>
<dbReference type="OpenTargets" id="ENSG00000121570"/>
<dbReference type="PharmGKB" id="PA134958838"/>
<dbReference type="VEuPathDB" id="HostDB:ENSG00000121570"/>
<dbReference type="eggNOG" id="ENOG502R0CF">
    <property type="taxonomic scope" value="Eukaryota"/>
</dbReference>
<dbReference type="GeneTree" id="ENSGT00390000004871"/>
<dbReference type="HOGENOM" id="CLU_080062_0_0_1"/>
<dbReference type="InParanoid" id="Q7L190"/>
<dbReference type="OMA" id="WVPEKPG"/>
<dbReference type="OrthoDB" id="9831002at2759"/>
<dbReference type="PAN-GO" id="Q7L190">
    <property type="GO annotations" value="3 GO annotations based on evolutionary models"/>
</dbReference>
<dbReference type="PhylomeDB" id="Q7L190"/>
<dbReference type="TreeFam" id="TF338129"/>
<dbReference type="PathwayCommons" id="Q7L190"/>
<dbReference type="Reactome" id="R-HSA-2892247">
    <property type="pathway name" value="POU5F1 (OCT4), SOX2, NANOG activate genes related to proliferation"/>
</dbReference>
<dbReference type="Reactome" id="R-HSA-9819196">
    <property type="pathway name" value="Zygotic genome activation (ZGA)"/>
</dbReference>
<dbReference type="SignaLink" id="Q7L190"/>
<dbReference type="SIGNOR" id="Q7L190"/>
<dbReference type="BioGRID-ORCS" id="55211">
    <property type="hits" value="9 hits in 1137 CRISPR screens"/>
</dbReference>
<dbReference type="ChiTaRS" id="DPPA4">
    <property type="organism name" value="human"/>
</dbReference>
<dbReference type="GenomeRNAi" id="55211"/>
<dbReference type="Pharos" id="Q7L190">
    <property type="development level" value="Tbio"/>
</dbReference>
<dbReference type="PRO" id="PR:Q7L190"/>
<dbReference type="Proteomes" id="UP000005640">
    <property type="component" value="Chromosome 3"/>
</dbReference>
<dbReference type="RNAct" id="Q7L190">
    <property type="molecule type" value="protein"/>
</dbReference>
<dbReference type="Bgee" id="ENSG00000121570">
    <property type="expression patterns" value="Expressed in primordial germ cell in gonad and 105 other cell types or tissues"/>
</dbReference>
<dbReference type="ExpressionAtlas" id="Q7L190">
    <property type="expression patterns" value="baseline and differential"/>
</dbReference>
<dbReference type="GO" id="GO:0005654">
    <property type="term" value="C:nucleoplasm"/>
    <property type="evidence" value="ECO:0000304"/>
    <property type="project" value="Reactome"/>
</dbReference>
<dbReference type="GO" id="GO:0005634">
    <property type="term" value="C:nucleus"/>
    <property type="evidence" value="ECO:0000318"/>
    <property type="project" value="GO_Central"/>
</dbReference>
<dbReference type="GO" id="GO:0003682">
    <property type="term" value="F:chromatin binding"/>
    <property type="evidence" value="ECO:0000318"/>
    <property type="project" value="GO_Central"/>
</dbReference>
<dbReference type="GO" id="GO:0060484">
    <property type="term" value="P:lung-associated mesenchyme development"/>
    <property type="evidence" value="ECO:0007669"/>
    <property type="project" value="Ensembl"/>
</dbReference>
<dbReference type="GO" id="GO:0048731">
    <property type="term" value="P:system development"/>
    <property type="evidence" value="ECO:0000318"/>
    <property type="project" value="GO_Central"/>
</dbReference>
<dbReference type="InterPro" id="IPR039590">
    <property type="entry name" value="Dppa2/4"/>
</dbReference>
<dbReference type="InterPro" id="IPR025891">
    <property type="entry name" value="Dppa2/4_C_dom"/>
</dbReference>
<dbReference type="InterPro" id="IPR025892">
    <property type="entry name" value="Dppa2/4_central_dom"/>
</dbReference>
<dbReference type="PANTHER" id="PTHR16073">
    <property type="entry name" value="DCR DOMAIN-CONTAINING PROTEIN"/>
    <property type="match status" value="1"/>
</dbReference>
<dbReference type="PANTHER" id="PTHR16073:SF8">
    <property type="entry name" value="DEVELOPMENTAL PLURIPOTENCY-ASSOCIATED PROTEIN 4"/>
    <property type="match status" value="1"/>
</dbReference>
<dbReference type="Pfam" id="PF14047">
    <property type="entry name" value="DCR"/>
    <property type="match status" value="1"/>
</dbReference>
<dbReference type="Pfam" id="PF14049">
    <property type="entry name" value="Dppa2_A"/>
    <property type="match status" value="2"/>
</dbReference>
<comment type="function">
    <text evidence="1">May be involved in the maintenance of active epigenetic status of target genes. May inhibit differentiation of embryonic cells into a primitive ectoderm lineage.</text>
</comment>
<comment type="subunit">
    <text evidence="1 5">Interacts with DPPA2 (By similarity). Interacts with PCGF1 (PubMed:26687479).</text>
</comment>
<comment type="interaction">
    <interactant intactId="EBI-710457">
        <id>Q7L190</id>
    </interactant>
    <interactant intactId="EBI-12034850">
        <id>Q86X95-2</id>
        <label>CIR1</label>
    </interactant>
    <organismsDiffer>false</organismsDiffer>
    <experiments>3</experiments>
</comment>
<comment type="interaction">
    <interactant intactId="EBI-710457">
        <id>Q7L190</id>
    </interactant>
    <interactant intactId="EBI-886">
        <id>P46108</id>
        <label>CRK</label>
    </interactant>
    <organismsDiffer>false</organismsDiffer>
    <experiments>4</experiments>
</comment>
<comment type="interaction">
    <interactant intactId="EBI-710457">
        <id>Q7L190</id>
    </interactant>
    <interactant intactId="EBI-769261">
        <id>Q96JC9</id>
        <label>EAF1</label>
    </interactant>
    <organismsDiffer>false</organismsDiffer>
    <experiments>3</experiments>
</comment>
<comment type="interaction">
    <interactant intactId="EBI-710457">
        <id>Q7L190</id>
    </interactant>
    <interactant intactId="EBI-73473">
        <id>Q14240</id>
        <label>EIF4A2</label>
    </interactant>
    <organismsDiffer>false</organismsDiffer>
    <experiments>3</experiments>
</comment>
<comment type="interaction">
    <interactant intactId="EBI-710457">
        <id>Q7L190</id>
    </interactant>
    <interactant intactId="EBI-10232522">
        <id>Q14240-2</id>
        <label>EIF4A2</label>
    </interactant>
    <organismsDiffer>false</organismsDiffer>
    <experiments>3</experiments>
</comment>
<comment type="interaction">
    <interactant intactId="EBI-710457">
        <id>Q7L190</id>
    </interactant>
    <interactant intactId="EBI-10253815">
        <id>Q6PIV2</id>
        <label>FOXR1</label>
    </interactant>
    <organismsDiffer>false</organismsDiffer>
    <experiments>3</experiments>
</comment>
<comment type="interaction">
    <interactant intactId="EBI-710457">
        <id>Q7L190</id>
    </interactant>
    <interactant intactId="EBI-750945">
        <id>Q9Y5P6</id>
        <label>GMPPB</label>
    </interactant>
    <organismsDiffer>false</organismsDiffer>
    <experiments>3</experiments>
</comment>
<comment type="interaction">
    <interactant intactId="EBI-710457">
        <id>Q7L190</id>
    </interactant>
    <interactant intactId="EBI-2847510">
        <id>Q13588</id>
        <label>GRAP</label>
    </interactant>
    <organismsDiffer>false</organismsDiffer>
    <experiments>3</experiments>
</comment>
<comment type="interaction">
    <interactant intactId="EBI-710457">
        <id>Q7L190</id>
    </interactant>
    <interactant intactId="EBI-401755">
        <id>P62993</id>
        <label>GRB2</label>
    </interactant>
    <organismsDiffer>false</organismsDiffer>
    <experiments>3</experiments>
</comment>
<comment type="interaction">
    <interactant intactId="EBI-710457">
        <id>Q7L190</id>
    </interactant>
    <interactant intactId="EBI-740290">
        <id>Q969Y2</id>
        <label>GTPBP3</label>
    </interactant>
    <organismsDiffer>false</organismsDiffer>
    <experiments>3</experiments>
</comment>
<comment type="interaction">
    <interactant intactId="EBI-710457">
        <id>Q7L190</id>
    </interactant>
    <interactant intactId="EBI-715611">
        <id>Q9C086</id>
        <label>INO80B</label>
    </interactant>
    <organismsDiffer>false</organismsDiffer>
    <experiments>3</experiments>
</comment>
<comment type="interaction">
    <interactant intactId="EBI-710457">
        <id>Q7L190</id>
    </interactant>
    <interactant intactId="EBI-750907">
        <id>Q9H8E8</id>
        <label>KAT14</label>
    </interactant>
    <organismsDiffer>false</organismsDiffer>
    <experiments>3</experiments>
</comment>
<comment type="interaction">
    <interactant intactId="EBI-710457">
        <id>Q7L190</id>
    </interactant>
    <interactant intactId="EBI-740738">
        <id>O95751</id>
        <label>LDOC1</label>
    </interactant>
    <organismsDiffer>false</organismsDiffer>
    <experiments>7</experiments>
</comment>
<comment type="interaction">
    <interactant intactId="EBI-710457">
        <id>Q7L190</id>
    </interactant>
    <interactant intactId="EBI-299134">
        <id>P61326</id>
        <label>MAGOH</label>
    </interactant>
    <organismsDiffer>false</organismsDiffer>
    <experiments>3</experiments>
</comment>
<comment type="interaction">
    <interactant intactId="EBI-710457">
        <id>Q7L190</id>
    </interactant>
    <interactant intactId="EBI-2555085">
        <id>Q8IVT2</id>
        <label>MISP</label>
    </interactant>
    <organismsDiffer>false</organismsDiffer>
    <experiments>3</experiments>
</comment>
<comment type="interaction">
    <interactant intactId="EBI-710457">
        <id>Q7L190</id>
    </interactant>
    <interactant intactId="EBI-11746523">
        <id>Q14511-2</id>
        <label>NEDD9</label>
    </interactant>
    <organismsDiffer>false</organismsDiffer>
    <experiments>3</experiments>
</comment>
<comment type="interaction">
    <interactant intactId="EBI-710457">
        <id>Q7L190</id>
    </interactant>
    <interactant intactId="EBI-1050213">
        <id>Q96KN7</id>
        <label>RPGRIP1</label>
    </interactant>
    <organismsDiffer>false</organismsDiffer>
    <experiments>3</experiments>
</comment>
<comment type="interaction">
    <interactant intactId="EBI-710457">
        <id>Q7L190</id>
    </interactant>
    <interactant intactId="EBI-10173690">
        <id>Q6FGM0</id>
        <label>SH3GL1</label>
    </interactant>
    <organismsDiffer>false</organismsDiffer>
    <experiments>5</experiments>
</comment>
<comment type="interaction">
    <interactant intactId="EBI-710457">
        <id>Q7L190</id>
    </interactant>
    <interactant intactId="EBI-697911">
        <id>Q99961</id>
        <label>SH3GL1</label>
    </interactant>
    <organismsDiffer>false</organismsDiffer>
    <experiments>10</experiments>
</comment>
<comment type="interaction">
    <interactant intactId="EBI-710457">
        <id>Q7L190</id>
    </interactant>
    <interactant intactId="EBI-298169">
        <id>Q96RF0</id>
        <label>SNX18</label>
    </interactant>
    <organismsDiffer>false</organismsDiffer>
    <experiments>3</experiments>
</comment>
<comment type="interaction">
    <interactant intactId="EBI-710457">
        <id>Q7L190</id>
    </interactant>
    <interactant intactId="EBI-2481535">
        <id>Q8WV41</id>
        <label>SNX33</label>
    </interactant>
    <organismsDiffer>false</organismsDiffer>
    <experiments>5</experiments>
</comment>
<comment type="interaction">
    <interactant intactId="EBI-710457">
        <id>Q7L190</id>
    </interactant>
    <interactant intactId="EBI-12023934">
        <id>Q5MJ10</id>
        <label>SPANXN2</label>
    </interactant>
    <organismsDiffer>false</organismsDiffer>
    <experiments>3</experiments>
</comment>
<comment type="interaction">
    <interactant intactId="EBI-710457">
        <id>Q7L190</id>
    </interactant>
    <interactant intactId="EBI-740492">
        <id>Q9UKI8</id>
        <label>TLK1</label>
    </interactant>
    <organismsDiffer>false</organismsDiffer>
    <experiments>3</experiments>
</comment>
<comment type="interaction">
    <interactant intactId="EBI-710457">
        <id>Q7L190</id>
    </interactant>
    <interactant intactId="EBI-357849">
        <id>Q15025</id>
        <label>TNIP1</label>
    </interactant>
    <organismsDiffer>false</organismsDiffer>
    <experiments>3</experiments>
</comment>
<comment type="subcellular location">
    <subcellularLocation>
        <location evidence="1">Nucleus</location>
    </subcellularLocation>
    <text evidence="1">Associated with transcriptionally active chromatin.</text>
</comment>
<comment type="sequence caution" evidence="6">
    <conflict type="erroneous initiation">
        <sequence resource="EMBL-CDS" id="BAA91765"/>
    </conflict>
    <text>Truncated N-terminus.</text>
</comment>
<comment type="sequence caution" evidence="6">
    <conflict type="frameshift">
        <sequence resource="EMBL-CDS" id="BAB14188"/>
    </conflict>
</comment>
<reference key="1">
    <citation type="journal article" date="2004" name="Nat. Genet.">
        <title>Complete sequencing and characterization of 21,243 full-length human cDNAs.</title>
        <authorList>
            <person name="Ota T."/>
            <person name="Suzuki Y."/>
            <person name="Nishikawa T."/>
            <person name="Otsuki T."/>
            <person name="Sugiyama T."/>
            <person name="Irie R."/>
            <person name="Wakamatsu A."/>
            <person name="Hayashi K."/>
            <person name="Sato H."/>
            <person name="Nagai K."/>
            <person name="Kimura K."/>
            <person name="Makita H."/>
            <person name="Sekine M."/>
            <person name="Obayashi M."/>
            <person name="Nishi T."/>
            <person name="Shibahara T."/>
            <person name="Tanaka T."/>
            <person name="Ishii S."/>
            <person name="Yamamoto J."/>
            <person name="Saito K."/>
            <person name="Kawai Y."/>
            <person name="Isono Y."/>
            <person name="Nakamura Y."/>
            <person name="Nagahari K."/>
            <person name="Murakami K."/>
            <person name="Yasuda T."/>
            <person name="Iwayanagi T."/>
            <person name="Wagatsuma M."/>
            <person name="Shiratori A."/>
            <person name="Sudo H."/>
            <person name="Hosoiri T."/>
            <person name="Kaku Y."/>
            <person name="Kodaira H."/>
            <person name="Kondo H."/>
            <person name="Sugawara M."/>
            <person name="Takahashi M."/>
            <person name="Kanda K."/>
            <person name="Yokoi T."/>
            <person name="Furuya T."/>
            <person name="Kikkawa E."/>
            <person name="Omura Y."/>
            <person name="Abe K."/>
            <person name="Kamihara K."/>
            <person name="Katsuta N."/>
            <person name="Sato K."/>
            <person name="Tanikawa M."/>
            <person name="Yamazaki M."/>
            <person name="Ninomiya K."/>
            <person name="Ishibashi T."/>
            <person name="Yamashita H."/>
            <person name="Murakawa K."/>
            <person name="Fujimori K."/>
            <person name="Tanai H."/>
            <person name="Kimata M."/>
            <person name="Watanabe M."/>
            <person name="Hiraoka S."/>
            <person name="Chiba Y."/>
            <person name="Ishida S."/>
            <person name="Ono Y."/>
            <person name="Takiguchi S."/>
            <person name="Watanabe S."/>
            <person name="Yosida M."/>
            <person name="Hotuta T."/>
            <person name="Kusano J."/>
            <person name="Kanehori K."/>
            <person name="Takahashi-Fujii A."/>
            <person name="Hara H."/>
            <person name="Tanase T.-O."/>
            <person name="Nomura Y."/>
            <person name="Togiya S."/>
            <person name="Komai F."/>
            <person name="Hara R."/>
            <person name="Takeuchi K."/>
            <person name="Arita M."/>
            <person name="Imose N."/>
            <person name="Musashino K."/>
            <person name="Yuuki H."/>
            <person name="Oshima A."/>
            <person name="Sasaki N."/>
            <person name="Aotsuka S."/>
            <person name="Yoshikawa Y."/>
            <person name="Matsunawa H."/>
            <person name="Ichihara T."/>
            <person name="Shiohata N."/>
            <person name="Sano S."/>
            <person name="Moriya S."/>
            <person name="Momiyama H."/>
            <person name="Satoh N."/>
            <person name="Takami S."/>
            <person name="Terashima Y."/>
            <person name="Suzuki O."/>
            <person name="Nakagawa S."/>
            <person name="Senoh A."/>
            <person name="Mizoguchi H."/>
            <person name="Goto Y."/>
            <person name="Shimizu F."/>
            <person name="Wakebe H."/>
            <person name="Hishigaki H."/>
            <person name="Watanabe T."/>
            <person name="Sugiyama A."/>
            <person name="Takemoto M."/>
            <person name="Kawakami B."/>
            <person name="Yamazaki M."/>
            <person name="Watanabe K."/>
            <person name="Kumagai A."/>
            <person name="Itakura S."/>
            <person name="Fukuzumi Y."/>
            <person name="Fujimori Y."/>
            <person name="Komiyama M."/>
            <person name="Tashiro H."/>
            <person name="Tanigami A."/>
            <person name="Fujiwara T."/>
            <person name="Ono T."/>
            <person name="Yamada K."/>
            <person name="Fujii Y."/>
            <person name="Ozaki K."/>
            <person name="Hirao M."/>
            <person name="Ohmori Y."/>
            <person name="Kawabata A."/>
            <person name="Hikiji T."/>
            <person name="Kobatake N."/>
            <person name="Inagaki H."/>
            <person name="Ikema Y."/>
            <person name="Okamoto S."/>
            <person name="Okitani R."/>
            <person name="Kawakami T."/>
            <person name="Noguchi S."/>
            <person name="Itoh T."/>
            <person name="Shigeta K."/>
            <person name="Senba T."/>
            <person name="Matsumura K."/>
            <person name="Nakajima Y."/>
            <person name="Mizuno T."/>
            <person name="Morinaga M."/>
            <person name="Sasaki M."/>
            <person name="Togashi T."/>
            <person name="Oyama M."/>
            <person name="Hata H."/>
            <person name="Watanabe M."/>
            <person name="Komatsu T."/>
            <person name="Mizushima-Sugano J."/>
            <person name="Satoh T."/>
            <person name="Shirai Y."/>
            <person name="Takahashi Y."/>
            <person name="Nakagawa K."/>
            <person name="Okumura K."/>
            <person name="Nagase T."/>
            <person name="Nomura N."/>
            <person name="Kikuchi H."/>
            <person name="Masuho Y."/>
            <person name="Yamashita R."/>
            <person name="Nakai K."/>
            <person name="Yada T."/>
            <person name="Nakamura Y."/>
            <person name="Ohara O."/>
            <person name="Isogai T."/>
            <person name="Sugano S."/>
        </authorList>
    </citation>
    <scope>NUCLEOTIDE SEQUENCE [LARGE SCALE MRNA]</scope>
    <scope>VARIANT VAL-55</scope>
    <source>
        <tissue>Teratocarcinoma</tissue>
    </source>
</reference>
<reference key="2">
    <citation type="journal article" date="2006" name="Nature">
        <title>The DNA sequence, annotation and analysis of human chromosome 3.</title>
        <authorList>
            <person name="Muzny D.M."/>
            <person name="Scherer S.E."/>
            <person name="Kaul R."/>
            <person name="Wang J."/>
            <person name="Yu J."/>
            <person name="Sudbrak R."/>
            <person name="Buhay C.J."/>
            <person name="Chen R."/>
            <person name="Cree A."/>
            <person name="Ding Y."/>
            <person name="Dugan-Rocha S."/>
            <person name="Gill R."/>
            <person name="Gunaratne P."/>
            <person name="Harris R.A."/>
            <person name="Hawes A.C."/>
            <person name="Hernandez J."/>
            <person name="Hodgson A.V."/>
            <person name="Hume J."/>
            <person name="Jackson A."/>
            <person name="Khan Z.M."/>
            <person name="Kovar-Smith C."/>
            <person name="Lewis L.R."/>
            <person name="Lozado R.J."/>
            <person name="Metzker M.L."/>
            <person name="Milosavljevic A."/>
            <person name="Miner G.R."/>
            <person name="Morgan M.B."/>
            <person name="Nazareth L.V."/>
            <person name="Scott G."/>
            <person name="Sodergren E."/>
            <person name="Song X.-Z."/>
            <person name="Steffen D."/>
            <person name="Wei S."/>
            <person name="Wheeler D.A."/>
            <person name="Wright M.W."/>
            <person name="Worley K.C."/>
            <person name="Yuan Y."/>
            <person name="Zhang Z."/>
            <person name="Adams C.Q."/>
            <person name="Ansari-Lari M.A."/>
            <person name="Ayele M."/>
            <person name="Brown M.J."/>
            <person name="Chen G."/>
            <person name="Chen Z."/>
            <person name="Clendenning J."/>
            <person name="Clerc-Blankenburg K.P."/>
            <person name="Chen R."/>
            <person name="Chen Z."/>
            <person name="Davis C."/>
            <person name="Delgado O."/>
            <person name="Dinh H.H."/>
            <person name="Dong W."/>
            <person name="Draper H."/>
            <person name="Ernst S."/>
            <person name="Fu G."/>
            <person name="Gonzalez-Garay M.L."/>
            <person name="Garcia D.K."/>
            <person name="Gillett W."/>
            <person name="Gu J."/>
            <person name="Hao B."/>
            <person name="Haugen E."/>
            <person name="Havlak P."/>
            <person name="He X."/>
            <person name="Hennig S."/>
            <person name="Hu S."/>
            <person name="Huang W."/>
            <person name="Jackson L.R."/>
            <person name="Jacob L.S."/>
            <person name="Kelly S.H."/>
            <person name="Kube M."/>
            <person name="Levy R."/>
            <person name="Li Z."/>
            <person name="Liu B."/>
            <person name="Liu J."/>
            <person name="Liu W."/>
            <person name="Lu J."/>
            <person name="Maheshwari M."/>
            <person name="Nguyen B.-V."/>
            <person name="Okwuonu G.O."/>
            <person name="Palmeiri A."/>
            <person name="Pasternak S."/>
            <person name="Perez L.M."/>
            <person name="Phelps K.A."/>
            <person name="Plopper F.J."/>
            <person name="Qiang B."/>
            <person name="Raymond C."/>
            <person name="Rodriguez R."/>
            <person name="Saenphimmachak C."/>
            <person name="Santibanez J."/>
            <person name="Shen H."/>
            <person name="Shen Y."/>
            <person name="Subramanian S."/>
            <person name="Tabor P.E."/>
            <person name="Verduzco D."/>
            <person name="Waldron L."/>
            <person name="Wang J."/>
            <person name="Wang J."/>
            <person name="Wang Q."/>
            <person name="Williams G.A."/>
            <person name="Wong G.K.-S."/>
            <person name="Yao Z."/>
            <person name="Zhang J."/>
            <person name="Zhang X."/>
            <person name="Zhao G."/>
            <person name="Zhou J."/>
            <person name="Zhou Y."/>
            <person name="Nelson D."/>
            <person name="Lehrach H."/>
            <person name="Reinhardt R."/>
            <person name="Naylor S.L."/>
            <person name="Yang H."/>
            <person name="Olson M."/>
            <person name="Weinstock G."/>
            <person name="Gibbs R.A."/>
        </authorList>
    </citation>
    <scope>NUCLEOTIDE SEQUENCE [LARGE SCALE GENOMIC DNA]</scope>
</reference>
<reference key="3">
    <citation type="journal article" date="2004" name="Genome Res.">
        <title>The status, quality, and expansion of the NIH full-length cDNA project: the Mammalian Gene Collection (MGC).</title>
        <authorList>
            <consortium name="The MGC Project Team"/>
        </authorList>
    </citation>
    <scope>NUCLEOTIDE SEQUENCE [LARGE SCALE MRNA]</scope>
    <scope>VARIANT VAL-55</scope>
    <source>
        <tissue>Testis</tissue>
    </source>
</reference>
<reference key="4">
    <citation type="journal article" date="2011" name="Sci. Signal.">
        <title>System-wide temporal characterization of the proteome and phosphoproteome of human embryonic stem cell differentiation.</title>
        <authorList>
            <person name="Rigbolt K.T."/>
            <person name="Prokhorova T.A."/>
            <person name="Akimov V."/>
            <person name="Henningsen J."/>
            <person name="Johansen P.T."/>
            <person name="Kratchmarova I."/>
            <person name="Kassem M."/>
            <person name="Mann M."/>
            <person name="Olsen J.V."/>
            <person name="Blagoev B."/>
        </authorList>
    </citation>
    <scope>PHOSPHORYLATION [LARGE SCALE ANALYSIS] AT THR-215; SER-221 AND SER-226</scope>
    <scope>IDENTIFICATION BY MASS SPECTROMETRY [LARGE SCALE ANALYSIS]</scope>
</reference>
<reference key="5">
    <citation type="journal article" date="2015" name="Sci. Rep.">
        <title>The variant Polycomb Repressor Complex 1 component PCGF1 interacts with a pluripotency sub-network that includes DPPA4, a regulator of embryogenesis.</title>
        <authorList>
            <person name="Oliviero G."/>
            <person name="Munawar N."/>
            <person name="Watson A."/>
            <person name="Streubel G."/>
            <person name="Manning G."/>
            <person name="Bardwell V."/>
            <person name="Bracken A.P."/>
            <person name="Cagney G."/>
        </authorList>
    </citation>
    <scope>IDENTIFICATION BY MASS SPECTROMETRY</scope>
    <scope>INTERACTION WITH PCGF1</scope>
</reference>
<gene>
    <name type="primary">DPPA4</name>
</gene>
<accession>Q7L190</accession>
<accession>A8K4M7</accession>
<accession>Q9H9N5</accession>
<accession>Q9NVI6</accession>
<feature type="chain" id="PRO_0000239268" description="Developmental pluripotency-associated protein 4">
    <location>
        <begin position="1"/>
        <end position="304"/>
    </location>
</feature>
<feature type="region of interest" description="Disordered" evidence="2">
    <location>
        <begin position="1"/>
        <end position="84"/>
    </location>
</feature>
<feature type="region of interest" description="Disordered" evidence="2">
    <location>
        <begin position="147"/>
        <end position="176"/>
    </location>
</feature>
<feature type="compositionally biased region" description="Polar residues" evidence="2">
    <location>
        <begin position="1"/>
        <end position="11"/>
    </location>
</feature>
<feature type="compositionally biased region" description="Basic and acidic residues" evidence="2">
    <location>
        <begin position="12"/>
        <end position="29"/>
    </location>
</feature>
<feature type="modified residue" description="Phosphothreonine" evidence="7">
    <location>
        <position position="215"/>
    </location>
</feature>
<feature type="modified residue" description="Phosphoserine" evidence="7">
    <location>
        <position position="221"/>
    </location>
</feature>
<feature type="modified residue" description="Phosphoserine" evidence="7">
    <location>
        <position position="226"/>
    </location>
</feature>
<feature type="sequence variant" id="VAR_060372" description="In dbSNP:rs3762648." evidence="3 4">
    <original>I</original>
    <variation>V</variation>
    <location>
        <position position="55"/>
    </location>
</feature>
<feature type="sequence variant" id="VAR_060373" description="In dbSNP:rs3905734.">
    <original>S</original>
    <variation>F</variation>
    <location>
        <position position="226"/>
    </location>
</feature>
<protein>
    <recommendedName>
        <fullName>Developmental pluripotency-associated protein 4</fullName>
    </recommendedName>
</protein>
<sequence length="304" mass="33541">MLRGSASSTSMEKAKGKEWTSTEKSREEDQQASNQPNSIALPGTSAKRTKEKMSIKGSKVLCPKKKAEHTDNPRPQKKIPIPPLPSKLPPVNLIHRDILRAWCQQLKLSSKGQKLDAYKRLCAFAYPNQKDFPSTAKEAKIRKSLQKKLKVEKGETSLQSSETHPPEVALPPVGEPPALENSTALLEGVNTVVVTTSAPEALLASWARISARARTPEAVESPQEASGVRWCVVHGKSLPADTDGWVHLQFHAGQAWVPEKQEGRVSALFLLPASNFPPPHLEDNMLCPKCVHRNKVLIKSLQWE</sequence>
<keyword id="KW-0217">Developmental protein</keyword>
<keyword id="KW-0539">Nucleus</keyword>
<keyword id="KW-0597">Phosphoprotein</keyword>
<keyword id="KW-1267">Proteomics identification</keyword>
<keyword id="KW-1185">Reference proteome</keyword>
<keyword id="KW-0804">Transcription</keyword>
<keyword id="KW-0805">Transcription regulation</keyword>
<organism>
    <name type="scientific">Homo sapiens</name>
    <name type="common">Human</name>
    <dbReference type="NCBI Taxonomy" id="9606"/>
    <lineage>
        <taxon>Eukaryota</taxon>
        <taxon>Metazoa</taxon>
        <taxon>Chordata</taxon>
        <taxon>Craniata</taxon>
        <taxon>Vertebrata</taxon>
        <taxon>Euteleostomi</taxon>
        <taxon>Mammalia</taxon>
        <taxon>Eutheria</taxon>
        <taxon>Euarchontoglires</taxon>
        <taxon>Primates</taxon>
        <taxon>Haplorrhini</taxon>
        <taxon>Catarrhini</taxon>
        <taxon>Hominidae</taxon>
        <taxon>Homo</taxon>
    </lineage>
</organism>
<proteinExistence type="evidence at protein level"/>